<protein>
    <recommendedName>
        <fullName evidence="1">Transcription antitermination protein NusB</fullName>
    </recommendedName>
    <alternativeName>
        <fullName evidence="1">Antitermination factor NusB</fullName>
    </alternativeName>
</protein>
<reference key="1">
    <citation type="journal article" date="2013" name="Stand. Genomic Sci.">
        <title>Complete genome sequence of Arthrobacter sp. strain FB24.</title>
        <authorList>
            <person name="Nakatsu C.H."/>
            <person name="Barabote R."/>
            <person name="Thompson S."/>
            <person name="Bruce D."/>
            <person name="Detter C."/>
            <person name="Brettin T."/>
            <person name="Han C."/>
            <person name="Beasley F."/>
            <person name="Chen W."/>
            <person name="Konopka A."/>
            <person name="Xie G."/>
        </authorList>
    </citation>
    <scope>NUCLEOTIDE SEQUENCE [LARGE SCALE GENOMIC DNA]</scope>
    <source>
        <strain>FB24</strain>
    </source>
</reference>
<evidence type="ECO:0000255" key="1">
    <source>
        <dbReference type="HAMAP-Rule" id="MF_00073"/>
    </source>
</evidence>
<feature type="chain" id="PRO_1000023705" description="Transcription antitermination protein NusB">
    <location>
        <begin position="1"/>
        <end position="136"/>
    </location>
</feature>
<proteinExistence type="inferred from homology"/>
<name>NUSB_ARTS2</name>
<organism>
    <name type="scientific">Arthrobacter sp. (strain FB24)</name>
    <dbReference type="NCBI Taxonomy" id="290399"/>
    <lineage>
        <taxon>Bacteria</taxon>
        <taxon>Bacillati</taxon>
        <taxon>Actinomycetota</taxon>
        <taxon>Actinomycetes</taxon>
        <taxon>Micrococcales</taxon>
        <taxon>Micrococcaceae</taxon>
        <taxon>Arthrobacter</taxon>
    </lineage>
</organism>
<accession>A0JX79</accession>
<comment type="function">
    <text evidence="1">Involved in transcription antitermination. Required for transcription of ribosomal RNA (rRNA) genes. Binds specifically to the boxA antiterminator sequence of the ribosomal RNA (rrn) operons.</text>
</comment>
<comment type="similarity">
    <text evidence="1">Belongs to the NusB family.</text>
</comment>
<keyword id="KW-1185">Reference proteome</keyword>
<keyword id="KW-0694">RNA-binding</keyword>
<keyword id="KW-0804">Transcription</keyword>
<keyword id="KW-0889">Transcription antitermination</keyword>
<keyword id="KW-0805">Transcription regulation</keyword>
<dbReference type="EMBL" id="CP000454">
    <property type="protein sequence ID" value="ABK03649.1"/>
    <property type="molecule type" value="Genomic_DNA"/>
</dbReference>
<dbReference type="RefSeq" id="WP_011692113.1">
    <property type="nucleotide sequence ID" value="NC_008541.1"/>
</dbReference>
<dbReference type="SMR" id="A0JX79"/>
<dbReference type="STRING" id="290399.Arth_2269"/>
<dbReference type="KEGG" id="art:Arth_2269"/>
<dbReference type="eggNOG" id="COG0781">
    <property type="taxonomic scope" value="Bacteria"/>
</dbReference>
<dbReference type="HOGENOM" id="CLU_087843_2_3_11"/>
<dbReference type="OrthoDB" id="3528057at2"/>
<dbReference type="Proteomes" id="UP000000754">
    <property type="component" value="Chromosome"/>
</dbReference>
<dbReference type="GO" id="GO:0005829">
    <property type="term" value="C:cytosol"/>
    <property type="evidence" value="ECO:0007669"/>
    <property type="project" value="TreeGrafter"/>
</dbReference>
<dbReference type="GO" id="GO:0003723">
    <property type="term" value="F:RNA binding"/>
    <property type="evidence" value="ECO:0007669"/>
    <property type="project" value="UniProtKB-UniRule"/>
</dbReference>
<dbReference type="GO" id="GO:0006353">
    <property type="term" value="P:DNA-templated transcription termination"/>
    <property type="evidence" value="ECO:0007669"/>
    <property type="project" value="UniProtKB-UniRule"/>
</dbReference>
<dbReference type="GO" id="GO:0031564">
    <property type="term" value="P:transcription antitermination"/>
    <property type="evidence" value="ECO:0007669"/>
    <property type="project" value="UniProtKB-KW"/>
</dbReference>
<dbReference type="Gene3D" id="1.10.940.10">
    <property type="entry name" value="NusB-like"/>
    <property type="match status" value="1"/>
</dbReference>
<dbReference type="HAMAP" id="MF_00073">
    <property type="entry name" value="NusB"/>
    <property type="match status" value="1"/>
</dbReference>
<dbReference type="InterPro" id="IPR035926">
    <property type="entry name" value="NusB-like_sf"/>
</dbReference>
<dbReference type="InterPro" id="IPR011605">
    <property type="entry name" value="NusB_fam"/>
</dbReference>
<dbReference type="InterPro" id="IPR006027">
    <property type="entry name" value="NusB_RsmB_TIM44"/>
</dbReference>
<dbReference type="NCBIfam" id="TIGR01951">
    <property type="entry name" value="nusB"/>
    <property type="match status" value="1"/>
</dbReference>
<dbReference type="PANTHER" id="PTHR11078:SF3">
    <property type="entry name" value="ANTITERMINATION NUSB DOMAIN-CONTAINING PROTEIN"/>
    <property type="match status" value="1"/>
</dbReference>
<dbReference type="PANTHER" id="PTHR11078">
    <property type="entry name" value="N UTILIZATION SUBSTANCE PROTEIN B-RELATED"/>
    <property type="match status" value="1"/>
</dbReference>
<dbReference type="Pfam" id="PF01029">
    <property type="entry name" value="NusB"/>
    <property type="match status" value="1"/>
</dbReference>
<dbReference type="SUPFAM" id="SSF48013">
    <property type="entry name" value="NusB-like"/>
    <property type="match status" value="1"/>
</dbReference>
<gene>
    <name evidence="1" type="primary">nusB</name>
    <name type="ordered locus">Arth_2269</name>
</gene>
<sequence>MSARGKARNRALDVLFEAEQRSLSAFDVLRSRREKTDQIVNPYTLEIVEGVVSHQAAIDEFLETYSQGWTLERMPSVDRIILRIGTWELLYNDDVPDGVAVSEAVALAKTLSTDESPSFINGLLGRLQQLKPSLLA</sequence>